<accession>B0CK70</accession>
<proteinExistence type="inferred from homology"/>
<reference key="1">
    <citation type="submission" date="2007-12" db="EMBL/GenBank/DDBJ databases">
        <title>Brucella suis ATCC 23445 whole genome shotgun sequencing project.</title>
        <authorList>
            <person name="Setubal J.C."/>
            <person name="Bowns C."/>
            <person name="Boyle S."/>
            <person name="Crasta O.R."/>
            <person name="Czar M.J."/>
            <person name="Dharmanolla C."/>
            <person name="Gillespie J.J."/>
            <person name="Kenyon R.W."/>
            <person name="Lu J."/>
            <person name="Mane S."/>
            <person name="Mohapatra S."/>
            <person name="Nagrani S."/>
            <person name="Purkayastha A."/>
            <person name="Rajasimha H.K."/>
            <person name="Shallom J.M."/>
            <person name="Shallom S."/>
            <person name="Shukla M."/>
            <person name="Snyder E.E."/>
            <person name="Sobral B.W."/>
            <person name="Wattam A.R."/>
            <person name="Will R."/>
            <person name="Williams K."/>
            <person name="Yoo H."/>
            <person name="Bruce D."/>
            <person name="Detter C."/>
            <person name="Munk C."/>
            <person name="Brettin T.S."/>
        </authorList>
    </citation>
    <scope>NUCLEOTIDE SEQUENCE [LARGE SCALE GENOMIC DNA]</scope>
    <source>
        <strain>ATCC 23445 / NCTC 10510</strain>
    </source>
</reference>
<keyword id="KW-0066">ATP synthesis</keyword>
<keyword id="KW-0997">Cell inner membrane</keyword>
<keyword id="KW-1003">Cell membrane</keyword>
<keyword id="KW-0138">CF(0)</keyword>
<keyword id="KW-0375">Hydrogen ion transport</keyword>
<keyword id="KW-0406">Ion transport</keyword>
<keyword id="KW-0472">Membrane</keyword>
<keyword id="KW-0812">Transmembrane</keyword>
<keyword id="KW-1133">Transmembrane helix</keyword>
<keyword id="KW-0813">Transport</keyword>
<sequence>MANDPIHQFQVSRWIPIDVGGVDLSFTNVSAFMVATVVLASGFLYLTSSGRGLIPTRLQSVSEMAYEFVATSLRDSAGSKGMKFFPFVFSLFMFVLVANFIGLFPYFYTVTSQIIVTFALSLLVIGTVIFYGFFKHGFGFLKLFVPSGVPGIIVPLVVLIEIISFLSRPISLSVRLFANMLAGHITLKVFAGFVVSLSSLGALGIGGAVLPLLMTVAITALEFLVAFLQAYVFTVLTCMYINDAVHPGH</sequence>
<dbReference type="EMBL" id="CP000911">
    <property type="protein sequence ID" value="ABY37500.1"/>
    <property type="molecule type" value="Genomic_DNA"/>
</dbReference>
<dbReference type="RefSeq" id="WP_002963543.1">
    <property type="nucleotide sequence ID" value="NC_010169.1"/>
</dbReference>
<dbReference type="SMR" id="B0CK70"/>
<dbReference type="KEGG" id="bmt:BSUIS_A0410"/>
<dbReference type="HOGENOM" id="CLU_041018_0_2_5"/>
<dbReference type="Proteomes" id="UP000008545">
    <property type="component" value="Chromosome I"/>
</dbReference>
<dbReference type="GO" id="GO:0005886">
    <property type="term" value="C:plasma membrane"/>
    <property type="evidence" value="ECO:0007669"/>
    <property type="project" value="UniProtKB-SubCell"/>
</dbReference>
<dbReference type="GO" id="GO:0045259">
    <property type="term" value="C:proton-transporting ATP synthase complex"/>
    <property type="evidence" value="ECO:0007669"/>
    <property type="project" value="UniProtKB-KW"/>
</dbReference>
<dbReference type="GO" id="GO:0046933">
    <property type="term" value="F:proton-transporting ATP synthase activity, rotational mechanism"/>
    <property type="evidence" value="ECO:0007669"/>
    <property type="project" value="UniProtKB-UniRule"/>
</dbReference>
<dbReference type="CDD" id="cd00310">
    <property type="entry name" value="ATP-synt_Fo_a_6"/>
    <property type="match status" value="1"/>
</dbReference>
<dbReference type="FunFam" id="1.20.120.220:FF:000003">
    <property type="entry name" value="ATP synthase subunit a"/>
    <property type="match status" value="1"/>
</dbReference>
<dbReference type="Gene3D" id="1.20.120.220">
    <property type="entry name" value="ATP synthase, F0 complex, subunit A"/>
    <property type="match status" value="1"/>
</dbReference>
<dbReference type="HAMAP" id="MF_01393">
    <property type="entry name" value="ATP_synth_a_bact"/>
    <property type="match status" value="1"/>
</dbReference>
<dbReference type="InterPro" id="IPR000568">
    <property type="entry name" value="ATP_synth_F0_asu"/>
</dbReference>
<dbReference type="InterPro" id="IPR023011">
    <property type="entry name" value="ATP_synth_F0_asu_AS"/>
</dbReference>
<dbReference type="InterPro" id="IPR045083">
    <property type="entry name" value="ATP_synth_F0_asu_bact/mt"/>
</dbReference>
<dbReference type="InterPro" id="IPR035908">
    <property type="entry name" value="F0_ATP_A_sf"/>
</dbReference>
<dbReference type="NCBIfam" id="TIGR01131">
    <property type="entry name" value="ATP_synt_6_or_A"/>
    <property type="match status" value="1"/>
</dbReference>
<dbReference type="NCBIfam" id="NF004482">
    <property type="entry name" value="PRK05815.2-4"/>
    <property type="match status" value="1"/>
</dbReference>
<dbReference type="PANTHER" id="PTHR11410">
    <property type="entry name" value="ATP SYNTHASE SUBUNIT A"/>
    <property type="match status" value="1"/>
</dbReference>
<dbReference type="PANTHER" id="PTHR11410:SF0">
    <property type="entry name" value="ATP SYNTHASE SUBUNIT A"/>
    <property type="match status" value="1"/>
</dbReference>
<dbReference type="Pfam" id="PF00119">
    <property type="entry name" value="ATP-synt_A"/>
    <property type="match status" value="1"/>
</dbReference>
<dbReference type="PRINTS" id="PR00123">
    <property type="entry name" value="ATPASEA"/>
</dbReference>
<dbReference type="SUPFAM" id="SSF81336">
    <property type="entry name" value="F1F0 ATP synthase subunit A"/>
    <property type="match status" value="1"/>
</dbReference>
<dbReference type="PROSITE" id="PS00449">
    <property type="entry name" value="ATPASE_A"/>
    <property type="match status" value="1"/>
</dbReference>
<gene>
    <name evidence="1" type="primary">atpB</name>
    <name type="ordered locus">BSUIS_A0410</name>
</gene>
<evidence type="ECO:0000255" key="1">
    <source>
        <dbReference type="HAMAP-Rule" id="MF_01393"/>
    </source>
</evidence>
<feature type="chain" id="PRO_0000362259" description="ATP synthase subunit a">
    <location>
        <begin position="1"/>
        <end position="249"/>
    </location>
</feature>
<feature type="transmembrane region" description="Helical" evidence="1">
    <location>
        <begin position="26"/>
        <end position="46"/>
    </location>
</feature>
<feature type="transmembrane region" description="Helical" evidence="1">
    <location>
        <begin position="84"/>
        <end position="104"/>
    </location>
</feature>
<feature type="transmembrane region" description="Helical" evidence="1">
    <location>
        <begin position="114"/>
        <end position="134"/>
    </location>
</feature>
<feature type="transmembrane region" description="Helical" evidence="1">
    <location>
        <begin position="143"/>
        <end position="163"/>
    </location>
</feature>
<feature type="transmembrane region" description="Helical" evidence="1">
    <location>
        <begin position="185"/>
        <end position="205"/>
    </location>
</feature>
<feature type="transmembrane region" description="Helical" evidence="1">
    <location>
        <begin position="208"/>
        <end position="228"/>
    </location>
</feature>
<protein>
    <recommendedName>
        <fullName evidence="1">ATP synthase subunit a</fullName>
    </recommendedName>
    <alternativeName>
        <fullName evidence="1">ATP synthase F0 sector subunit a</fullName>
    </alternativeName>
    <alternativeName>
        <fullName evidence="1">F-ATPase subunit 6</fullName>
    </alternativeName>
</protein>
<organism>
    <name type="scientific">Brucella suis (strain ATCC 23445 / NCTC 10510)</name>
    <dbReference type="NCBI Taxonomy" id="470137"/>
    <lineage>
        <taxon>Bacteria</taxon>
        <taxon>Pseudomonadati</taxon>
        <taxon>Pseudomonadota</taxon>
        <taxon>Alphaproteobacteria</taxon>
        <taxon>Hyphomicrobiales</taxon>
        <taxon>Brucellaceae</taxon>
        <taxon>Brucella/Ochrobactrum group</taxon>
        <taxon>Brucella</taxon>
    </lineage>
</organism>
<comment type="function">
    <text evidence="1">Key component of the proton channel; it plays a direct role in the translocation of protons across the membrane.</text>
</comment>
<comment type="subunit">
    <text evidence="1">F-type ATPases have 2 components, CF(1) - the catalytic core - and CF(0) - the membrane proton channel. CF(1) has five subunits: alpha(3), beta(3), gamma(1), delta(1), epsilon(1). CF(0) has three main subunits: a(1), b(2) and c(9-12). The alpha and beta chains form an alternating ring which encloses part of the gamma chain. CF(1) is attached to CF(0) by a central stalk formed by the gamma and epsilon chains, while a peripheral stalk is formed by the delta and b chains.</text>
</comment>
<comment type="subcellular location">
    <subcellularLocation>
        <location evidence="1">Cell inner membrane</location>
        <topology evidence="1">Multi-pass membrane protein</topology>
    </subcellularLocation>
</comment>
<comment type="similarity">
    <text evidence="1">Belongs to the ATPase A chain family.</text>
</comment>
<name>ATP6_BRUSI</name>